<protein>
    <recommendedName>
        <fullName evidence="1">2-dehydro-3-deoxyphosphooctonate aldolase</fullName>
        <ecNumber evidence="1">2.5.1.55</ecNumber>
    </recommendedName>
    <alternativeName>
        <fullName evidence="1">3-deoxy-D-manno-octulosonic acid 8-phosphate synthase</fullName>
    </alternativeName>
    <alternativeName>
        <fullName evidence="1">KDO-8-phosphate synthase</fullName>
        <shortName evidence="1">KDO 8-P synthase</shortName>
        <shortName evidence="1">KDOPS</shortName>
    </alternativeName>
    <alternativeName>
        <fullName evidence="1">Phospho-2-dehydro-3-deoxyoctonate aldolase</fullName>
    </alternativeName>
</protein>
<proteinExistence type="inferred from homology"/>
<evidence type="ECO:0000255" key="1">
    <source>
        <dbReference type="HAMAP-Rule" id="MF_00056"/>
    </source>
</evidence>
<feature type="chain" id="PRO_0000304464" description="2-dehydro-3-deoxyphosphooctonate aldolase">
    <location>
        <begin position="1"/>
        <end position="280"/>
    </location>
</feature>
<reference key="1">
    <citation type="journal article" date="2006" name="Appl. Environ. Microbiol.">
        <title>Complete genome sequence of the marine, chemolithoautotrophic, ammonia-oxidizing bacterium Nitrosococcus oceani ATCC 19707.</title>
        <authorList>
            <person name="Klotz M.G."/>
            <person name="Arp D.J."/>
            <person name="Chain P.S.G."/>
            <person name="El-Sheikh A.F."/>
            <person name="Hauser L.J."/>
            <person name="Hommes N.G."/>
            <person name="Larimer F.W."/>
            <person name="Malfatti S.A."/>
            <person name="Norton J.M."/>
            <person name="Poret-Peterson A.T."/>
            <person name="Vergez L.M."/>
            <person name="Ward B.B."/>
        </authorList>
    </citation>
    <scope>NUCLEOTIDE SEQUENCE [LARGE SCALE GENOMIC DNA]</scope>
    <source>
        <strain>ATCC 19707 / BCRC 17464 / JCM 30415 / NCIMB 11848 / C-107</strain>
    </source>
</reference>
<gene>
    <name evidence="1" type="primary">kdsA</name>
    <name type="ordered locus">Noc_0851</name>
</gene>
<name>KDSA_NITOC</name>
<dbReference type="EC" id="2.5.1.55" evidence="1"/>
<dbReference type="EMBL" id="CP000127">
    <property type="protein sequence ID" value="ABA57364.1"/>
    <property type="molecule type" value="Genomic_DNA"/>
</dbReference>
<dbReference type="RefSeq" id="WP_002809108.1">
    <property type="nucleotide sequence ID" value="NC_007484.1"/>
</dbReference>
<dbReference type="SMR" id="Q3JCT2"/>
<dbReference type="FunCoup" id="Q3JCT2">
    <property type="interactions" value="422"/>
</dbReference>
<dbReference type="STRING" id="323261.Noc_0851"/>
<dbReference type="KEGG" id="noc:Noc_0851"/>
<dbReference type="eggNOG" id="COG2877">
    <property type="taxonomic scope" value="Bacteria"/>
</dbReference>
<dbReference type="HOGENOM" id="CLU_036666_0_0_6"/>
<dbReference type="InParanoid" id="Q3JCT2"/>
<dbReference type="UniPathway" id="UPA00030"/>
<dbReference type="UniPathway" id="UPA00357">
    <property type="reaction ID" value="UER00474"/>
</dbReference>
<dbReference type="Proteomes" id="UP000006838">
    <property type="component" value="Chromosome"/>
</dbReference>
<dbReference type="GO" id="GO:0005737">
    <property type="term" value="C:cytoplasm"/>
    <property type="evidence" value="ECO:0007669"/>
    <property type="project" value="UniProtKB-SubCell"/>
</dbReference>
<dbReference type="GO" id="GO:0008676">
    <property type="term" value="F:3-deoxy-8-phosphooctulonate synthase activity"/>
    <property type="evidence" value="ECO:0007669"/>
    <property type="project" value="UniProtKB-UniRule"/>
</dbReference>
<dbReference type="GO" id="GO:0019294">
    <property type="term" value="P:keto-3-deoxy-D-manno-octulosonic acid biosynthetic process"/>
    <property type="evidence" value="ECO:0007669"/>
    <property type="project" value="UniProtKB-UniRule"/>
</dbReference>
<dbReference type="Gene3D" id="3.20.20.70">
    <property type="entry name" value="Aldolase class I"/>
    <property type="match status" value="1"/>
</dbReference>
<dbReference type="HAMAP" id="MF_00056">
    <property type="entry name" value="KDO8P_synth"/>
    <property type="match status" value="1"/>
</dbReference>
<dbReference type="InterPro" id="IPR013785">
    <property type="entry name" value="Aldolase_TIM"/>
</dbReference>
<dbReference type="InterPro" id="IPR006218">
    <property type="entry name" value="DAHP1/KDSA"/>
</dbReference>
<dbReference type="InterPro" id="IPR006269">
    <property type="entry name" value="KDO8P_synthase"/>
</dbReference>
<dbReference type="NCBIfam" id="TIGR01362">
    <property type="entry name" value="KDO8P_synth"/>
    <property type="match status" value="1"/>
</dbReference>
<dbReference type="NCBIfam" id="NF003543">
    <property type="entry name" value="PRK05198.1"/>
    <property type="match status" value="1"/>
</dbReference>
<dbReference type="PANTHER" id="PTHR21057">
    <property type="entry name" value="PHOSPHO-2-DEHYDRO-3-DEOXYHEPTONATE ALDOLASE"/>
    <property type="match status" value="1"/>
</dbReference>
<dbReference type="Pfam" id="PF00793">
    <property type="entry name" value="DAHP_synth_1"/>
    <property type="match status" value="1"/>
</dbReference>
<dbReference type="SUPFAM" id="SSF51569">
    <property type="entry name" value="Aldolase"/>
    <property type="match status" value="1"/>
</dbReference>
<organism>
    <name type="scientific">Nitrosococcus oceani (strain ATCC 19707 / BCRC 17464 / JCM 30415 / NCIMB 11848 / C-107)</name>
    <dbReference type="NCBI Taxonomy" id="323261"/>
    <lineage>
        <taxon>Bacteria</taxon>
        <taxon>Pseudomonadati</taxon>
        <taxon>Pseudomonadota</taxon>
        <taxon>Gammaproteobacteria</taxon>
        <taxon>Chromatiales</taxon>
        <taxon>Chromatiaceae</taxon>
        <taxon>Nitrosococcus</taxon>
    </lineage>
</organism>
<accession>Q3JCT2</accession>
<keyword id="KW-0963">Cytoplasm</keyword>
<keyword id="KW-0448">Lipopolysaccharide biosynthesis</keyword>
<keyword id="KW-1185">Reference proteome</keyword>
<keyword id="KW-0808">Transferase</keyword>
<comment type="catalytic activity">
    <reaction evidence="1">
        <text>D-arabinose 5-phosphate + phosphoenolpyruvate + H2O = 3-deoxy-alpha-D-manno-2-octulosonate-8-phosphate + phosphate</text>
        <dbReference type="Rhea" id="RHEA:14053"/>
        <dbReference type="ChEBI" id="CHEBI:15377"/>
        <dbReference type="ChEBI" id="CHEBI:43474"/>
        <dbReference type="ChEBI" id="CHEBI:57693"/>
        <dbReference type="ChEBI" id="CHEBI:58702"/>
        <dbReference type="ChEBI" id="CHEBI:85985"/>
        <dbReference type="EC" id="2.5.1.55"/>
    </reaction>
</comment>
<comment type="pathway">
    <text evidence="1">Carbohydrate biosynthesis; 3-deoxy-D-manno-octulosonate biosynthesis; 3-deoxy-D-manno-octulosonate from D-ribulose 5-phosphate: step 2/3.</text>
</comment>
<comment type="pathway">
    <text evidence="1">Bacterial outer membrane biogenesis; lipopolysaccharide biosynthesis.</text>
</comment>
<comment type="subcellular location">
    <subcellularLocation>
        <location evidence="1">Cytoplasm</location>
    </subcellularLocation>
</comment>
<comment type="similarity">
    <text evidence="1">Belongs to the KdsA family.</text>
</comment>
<sequence>MELCGFEVGLERALFLIAGPCVIESEQLALDTAGRLKEMTERLGIPFIYKSSFDKANRTAVESFRGLGMEAGLGILEKVKATLGVPVLTDVHEDTPLQEVAAVVDVLQTPAFLCRQTNFIQNVARQGRPVNIKKGQFLAPWDMKHVVEKARAVGNQQIMVCERGVSFGYNTLVSDMRSLAVMRDTGCPVVFDATHSVQQPGGKGGCSGGQREWVPVLARAAVAAGVAGVFMETHPDPERALSDGPNAWPLGAMEKLLETLSTIDKTVKTDGFLEAEYRLN</sequence>